<dbReference type="EMBL" id="U49170">
    <property type="protein sequence ID" value="AAB50982.1"/>
    <property type="molecule type" value="mRNA"/>
</dbReference>
<dbReference type="EMBL" id="AAFI02000013">
    <property type="protein sequence ID" value="EAL69601.1"/>
    <property type="molecule type" value="Genomic_DNA"/>
</dbReference>
<dbReference type="RefSeq" id="XP_643473.1">
    <property type="nucleotide sequence ID" value="XM_638381.1"/>
</dbReference>
<dbReference type="SMR" id="O00780"/>
<dbReference type="FunCoup" id="O00780">
    <property type="interactions" value="667"/>
</dbReference>
<dbReference type="STRING" id="44689.O00780"/>
<dbReference type="PaxDb" id="44689-DDB0185070"/>
<dbReference type="EnsemblProtists" id="EAL69601">
    <property type="protein sequence ID" value="EAL69601"/>
    <property type="gene ID" value="DDB_G0275701"/>
</dbReference>
<dbReference type="GeneID" id="8620054"/>
<dbReference type="KEGG" id="ddi:DDB_G0275701"/>
<dbReference type="dictyBase" id="DDB_G0275701">
    <property type="gene designation" value="vatE"/>
</dbReference>
<dbReference type="VEuPathDB" id="AmoebaDB:DDB_G0275701"/>
<dbReference type="eggNOG" id="KOG1664">
    <property type="taxonomic scope" value="Eukaryota"/>
</dbReference>
<dbReference type="HOGENOM" id="CLU_073641_1_0_1"/>
<dbReference type="InParanoid" id="O00780"/>
<dbReference type="OMA" id="QHMMAFI"/>
<dbReference type="PhylomeDB" id="O00780"/>
<dbReference type="Reactome" id="R-DDI-1222556">
    <property type="pathway name" value="ROS and RNS production in phagocytes"/>
</dbReference>
<dbReference type="Reactome" id="R-DDI-77387">
    <property type="pathway name" value="Insulin receptor recycling"/>
</dbReference>
<dbReference type="Reactome" id="R-DDI-917977">
    <property type="pathway name" value="Transferrin endocytosis and recycling"/>
</dbReference>
<dbReference type="Reactome" id="R-DDI-9639288">
    <property type="pathway name" value="Amino acids regulate mTORC1"/>
</dbReference>
<dbReference type="PRO" id="PR:O00780"/>
<dbReference type="Proteomes" id="UP000002195">
    <property type="component" value="Chromosome 2"/>
</dbReference>
<dbReference type="GO" id="GO:0031164">
    <property type="term" value="C:contractile vacuolar membrane"/>
    <property type="evidence" value="ECO:0000304"/>
    <property type="project" value="dictyBase"/>
</dbReference>
<dbReference type="GO" id="GO:0030139">
    <property type="term" value="C:endocytic vesicle"/>
    <property type="evidence" value="ECO:0000314"/>
    <property type="project" value="dictyBase"/>
</dbReference>
<dbReference type="GO" id="GO:0140220">
    <property type="term" value="C:pathogen-containing vacuole"/>
    <property type="evidence" value="ECO:0007005"/>
    <property type="project" value="dictyBase"/>
</dbReference>
<dbReference type="GO" id="GO:0045335">
    <property type="term" value="C:phagocytic vesicle"/>
    <property type="evidence" value="ECO:0007005"/>
    <property type="project" value="dictyBase"/>
</dbReference>
<dbReference type="GO" id="GO:0033178">
    <property type="term" value="C:proton-transporting two-sector ATPase complex, catalytic domain"/>
    <property type="evidence" value="ECO:0007669"/>
    <property type="project" value="InterPro"/>
</dbReference>
<dbReference type="GO" id="GO:0044877">
    <property type="term" value="F:protein-containing complex binding"/>
    <property type="evidence" value="ECO:0000314"/>
    <property type="project" value="dictyBase"/>
</dbReference>
<dbReference type="GO" id="GO:0046961">
    <property type="term" value="F:proton-transporting ATPase activity, rotational mechanism"/>
    <property type="evidence" value="ECO:0000318"/>
    <property type="project" value="GO_Central"/>
</dbReference>
<dbReference type="FunFam" id="3.30.2320.30:FF:000001">
    <property type="entry name" value="V-type proton atpase subunit e 1"/>
    <property type="match status" value="1"/>
</dbReference>
<dbReference type="Gene3D" id="6.10.250.1620">
    <property type="match status" value="1"/>
</dbReference>
<dbReference type="Gene3D" id="3.30.2320.30">
    <property type="entry name" value="ATP synthase, E subunit, C-terminal"/>
    <property type="match status" value="1"/>
</dbReference>
<dbReference type="HAMAP" id="MF_00311">
    <property type="entry name" value="ATP_synth_E_arch"/>
    <property type="match status" value="1"/>
</dbReference>
<dbReference type="InterPro" id="IPR038495">
    <property type="entry name" value="ATPase_E_C"/>
</dbReference>
<dbReference type="InterPro" id="IPR002842">
    <property type="entry name" value="ATPase_V1_Esu"/>
</dbReference>
<dbReference type="PANTHER" id="PTHR45715">
    <property type="entry name" value="ATPASE H+-TRANSPORTING V1 SUBUNIT E1A-RELATED"/>
    <property type="match status" value="1"/>
</dbReference>
<dbReference type="Pfam" id="PF01991">
    <property type="entry name" value="vATP-synt_E"/>
    <property type="match status" value="1"/>
</dbReference>
<dbReference type="SUPFAM" id="SSF160527">
    <property type="entry name" value="V-type ATPase subunit E-like"/>
    <property type="match status" value="1"/>
</dbReference>
<comment type="function">
    <text evidence="1">Subunit of the peripheral V1 complex of vacuolar ATPase essential for assembly or catalytic function. V-ATPase is responsible for acidifying a variety of intracellular compartments in eukaryotic cells (By similarity).</text>
</comment>
<comment type="subunit">
    <text evidence="1">V-ATPase is a heteromultimeric enzyme composed of a peripheral catalytic V1 complex (components A to H) attached to an integral membrane V0 proton pore complex (components: a, c, c', c'' and d).</text>
</comment>
<comment type="similarity">
    <text evidence="2">Belongs to the V-ATPase E subunit family.</text>
</comment>
<organism>
    <name type="scientific">Dictyostelium discoideum</name>
    <name type="common">Social amoeba</name>
    <dbReference type="NCBI Taxonomy" id="44689"/>
    <lineage>
        <taxon>Eukaryota</taxon>
        <taxon>Amoebozoa</taxon>
        <taxon>Evosea</taxon>
        <taxon>Eumycetozoa</taxon>
        <taxon>Dictyostelia</taxon>
        <taxon>Dictyosteliales</taxon>
        <taxon>Dictyosteliaceae</taxon>
        <taxon>Dictyostelium</taxon>
    </lineage>
</organism>
<accession>O00780</accession>
<accession>Q553E4</accession>
<keyword id="KW-0375">Hydrogen ion transport</keyword>
<keyword id="KW-0406">Ion transport</keyword>
<keyword id="KW-1185">Reference proteome</keyword>
<keyword id="KW-0813">Transport</keyword>
<reference key="1">
    <citation type="submission" date="1996-02" db="EMBL/GenBank/DDBJ databases">
        <authorList>
            <person name="Liu T."/>
            <person name="Kuspa A."/>
            <person name="Clarke M."/>
        </authorList>
    </citation>
    <scope>NUCLEOTIDE SEQUENCE [MRNA]</scope>
    <source>
        <strain>AX4</strain>
    </source>
</reference>
<reference key="2">
    <citation type="journal article" date="2002" name="Nature">
        <title>Sequence and analysis of chromosome 2 of Dictyostelium discoideum.</title>
        <authorList>
            <person name="Gloeckner G."/>
            <person name="Eichinger L."/>
            <person name="Szafranski K."/>
            <person name="Pachebat J.A."/>
            <person name="Bankier A.T."/>
            <person name="Dear P.H."/>
            <person name="Lehmann R."/>
            <person name="Baumgart C."/>
            <person name="Parra G."/>
            <person name="Abril J.F."/>
            <person name="Guigo R."/>
            <person name="Kumpf K."/>
            <person name="Tunggal B."/>
            <person name="Cox E.C."/>
            <person name="Quail M.A."/>
            <person name="Platzer M."/>
            <person name="Rosenthal A."/>
            <person name="Noegel A.A."/>
        </authorList>
    </citation>
    <scope>NUCLEOTIDE SEQUENCE [LARGE SCALE GENOMIC DNA]</scope>
    <source>
        <strain>AX4</strain>
    </source>
</reference>
<reference key="3">
    <citation type="journal article" date="2005" name="Nature">
        <title>The genome of the social amoeba Dictyostelium discoideum.</title>
        <authorList>
            <person name="Eichinger L."/>
            <person name="Pachebat J.A."/>
            <person name="Gloeckner G."/>
            <person name="Rajandream M.A."/>
            <person name="Sucgang R."/>
            <person name="Berriman M."/>
            <person name="Song J."/>
            <person name="Olsen R."/>
            <person name="Szafranski K."/>
            <person name="Xu Q."/>
            <person name="Tunggal B."/>
            <person name="Kummerfeld S."/>
            <person name="Madera M."/>
            <person name="Konfortov B.A."/>
            <person name="Rivero F."/>
            <person name="Bankier A.T."/>
            <person name="Lehmann R."/>
            <person name="Hamlin N."/>
            <person name="Davies R."/>
            <person name="Gaudet P."/>
            <person name="Fey P."/>
            <person name="Pilcher K."/>
            <person name="Chen G."/>
            <person name="Saunders D."/>
            <person name="Sodergren E.J."/>
            <person name="Davis P."/>
            <person name="Kerhornou A."/>
            <person name="Nie X."/>
            <person name="Hall N."/>
            <person name="Anjard C."/>
            <person name="Hemphill L."/>
            <person name="Bason N."/>
            <person name="Farbrother P."/>
            <person name="Desany B."/>
            <person name="Just E."/>
            <person name="Morio T."/>
            <person name="Rost R."/>
            <person name="Churcher C.M."/>
            <person name="Cooper J."/>
            <person name="Haydock S."/>
            <person name="van Driessche N."/>
            <person name="Cronin A."/>
            <person name="Goodhead I."/>
            <person name="Muzny D.M."/>
            <person name="Mourier T."/>
            <person name="Pain A."/>
            <person name="Lu M."/>
            <person name="Harper D."/>
            <person name="Lindsay R."/>
            <person name="Hauser H."/>
            <person name="James K.D."/>
            <person name="Quiles M."/>
            <person name="Madan Babu M."/>
            <person name="Saito T."/>
            <person name="Buchrieser C."/>
            <person name="Wardroper A."/>
            <person name="Felder M."/>
            <person name="Thangavelu M."/>
            <person name="Johnson D."/>
            <person name="Knights A."/>
            <person name="Loulseged H."/>
            <person name="Mungall K.L."/>
            <person name="Oliver K."/>
            <person name="Price C."/>
            <person name="Quail M.A."/>
            <person name="Urushihara H."/>
            <person name="Hernandez J."/>
            <person name="Rabbinowitsch E."/>
            <person name="Steffen D."/>
            <person name="Sanders M."/>
            <person name="Ma J."/>
            <person name="Kohara Y."/>
            <person name="Sharp S."/>
            <person name="Simmonds M.N."/>
            <person name="Spiegler S."/>
            <person name="Tivey A."/>
            <person name="Sugano S."/>
            <person name="White B."/>
            <person name="Walker D."/>
            <person name="Woodward J.R."/>
            <person name="Winckler T."/>
            <person name="Tanaka Y."/>
            <person name="Shaulsky G."/>
            <person name="Schleicher M."/>
            <person name="Weinstock G.M."/>
            <person name="Rosenthal A."/>
            <person name="Cox E.C."/>
            <person name="Chisholm R.L."/>
            <person name="Gibbs R.A."/>
            <person name="Loomis W.F."/>
            <person name="Platzer M."/>
            <person name="Kay R.R."/>
            <person name="Williams J.G."/>
            <person name="Dear P.H."/>
            <person name="Noegel A.A."/>
            <person name="Barrell B.G."/>
            <person name="Kuspa A."/>
        </authorList>
    </citation>
    <scope>NUCLEOTIDE SEQUENCE [LARGE SCALE GENOMIC DNA]</scope>
    <source>
        <strain>AX4</strain>
    </source>
</reference>
<reference key="4">
    <citation type="journal article" date="2006" name="Mol. Cell. Proteomics">
        <title>Proteomics fingerprinting of phagosome maturation and evidence for the role of a Galpha during uptake.</title>
        <authorList>
            <person name="Gotthardt D."/>
            <person name="Blancheteau V."/>
            <person name="Bosserhoff A."/>
            <person name="Ruppert T."/>
            <person name="Delorenzi M."/>
            <person name="Soldati T."/>
        </authorList>
    </citation>
    <scope>IDENTIFICATION BY MASS SPECTROMETRY [LARGE SCALE ANALYSIS]</scope>
    <source>
        <strain>AX2</strain>
    </source>
</reference>
<sequence length="233" mass="26572">MDDTQVNAQLDQMKNFILQEAQDKANEIKTKATQEFTSEKGRIFQNEKIKIIKEYEKKQKLIEVQKKINLSNELNKSRLSVLKVREECLRDVIKEAQKKLATISDDKDKYQTILKNLIYQGFVKLNENKIQVVGRKEDAGLLEKATTEAAAQYKKNVGKSIDVSVDKERFLPQGPKSDYNGPTCCGGVILSALEGRIICKNTLDSRLEICFDQLTPVIRTQLYGASTSRKFFD</sequence>
<evidence type="ECO:0000250" key="1"/>
<evidence type="ECO:0000305" key="2"/>
<gene>
    <name type="primary">vatE</name>
    <name type="ORF">DDB_G0275701</name>
</gene>
<name>VATE_DICDI</name>
<proteinExistence type="evidence at protein level"/>
<feature type="chain" id="PRO_0000117297" description="V-type proton ATPase subunit E">
    <location>
        <begin position="1"/>
        <end position="233"/>
    </location>
</feature>
<protein>
    <recommendedName>
        <fullName>V-type proton ATPase subunit E</fullName>
        <shortName>V-ATPase subunit E</shortName>
    </recommendedName>
    <alternativeName>
        <fullName>Vacuolar proton pump subunit E</fullName>
    </alternativeName>
</protein>